<keyword id="KW-0249">Electron transport</keyword>
<keyword id="KW-0472">Membrane</keyword>
<keyword id="KW-0496">Mitochondrion</keyword>
<keyword id="KW-0520">NAD</keyword>
<keyword id="KW-1185">Reference proteome</keyword>
<keyword id="KW-0679">Respiratory chain</keyword>
<keyword id="KW-1278">Translocase</keyword>
<keyword id="KW-0812">Transmembrane</keyword>
<keyword id="KW-1133">Transmembrane helix</keyword>
<keyword id="KW-0813">Transport</keyword>
<keyword id="KW-0830">Ubiquinone</keyword>
<feature type="chain" id="PRO_0000118383" description="NADH-ubiquinone oxidoreductase chain 4L">
    <location>
        <begin position="1"/>
        <end position="99"/>
    </location>
</feature>
<feature type="transmembrane region" description="Helical" evidence="2">
    <location>
        <begin position="4"/>
        <end position="24"/>
    </location>
</feature>
<feature type="transmembrane region" description="Helical" evidence="2">
    <location>
        <begin position="29"/>
        <end position="49"/>
    </location>
</feature>
<feature type="transmembrane region" description="Helical" evidence="2">
    <location>
        <begin position="63"/>
        <end position="83"/>
    </location>
</feature>
<comment type="function">
    <text evidence="1">Core subunit of the mitochondrial membrane respiratory chain NADH dehydrogenase (Complex I) that is believed to belong to the minimal assembly required for catalysis. Complex I functions in the transfer of electrons from NADH to the respiratory chain. The immediate electron acceptor for the enzyme is believed to be ubiquinone (By similarity).</text>
</comment>
<comment type="catalytic activity">
    <reaction>
        <text>a ubiquinone + NADH + 5 H(+)(in) = a ubiquinol + NAD(+) + 4 H(+)(out)</text>
        <dbReference type="Rhea" id="RHEA:29091"/>
        <dbReference type="Rhea" id="RHEA-COMP:9565"/>
        <dbReference type="Rhea" id="RHEA-COMP:9566"/>
        <dbReference type="ChEBI" id="CHEBI:15378"/>
        <dbReference type="ChEBI" id="CHEBI:16389"/>
        <dbReference type="ChEBI" id="CHEBI:17976"/>
        <dbReference type="ChEBI" id="CHEBI:57540"/>
        <dbReference type="ChEBI" id="CHEBI:57945"/>
        <dbReference type="EC" id="7.1.1.2"/>
    </reaction>
</comment>
<comment type="subcellular location">
    <subcellularLocation>
        <location evidence="1">Mitochondrion membrane</location>
        <topology evidence="1">Multi-pass membrane protein</topology>
    </subcellularLocation>
</comment>
<comment type="similarity">
    <text evidence="3">Belongs to the complex I subunit 4L family.</text>
</comment>
<comment type="sequence caution" evidence="3">
    <conflict type="erroneous initiation">
        <sequence resource="EMBL-CDS" id="AAD12199"/>
    </conflict>
</comment>
<reference key="1">
    <citation type="journal article" date="1993" name="Insect Mol. Biol.">
        <title>The mitochondrial genome of the mosquito Anopheles gambiae: DNA sequence, genome organization, and comparisons with mitochondrial sequences of other insects.</title>
        <authorList>
            <person name="Beard C.B."/>
            <person name="Hamm D.M."/>
            <person name="Collins F.H."/>
        </authorList>
    </citation>
    <scope>NUCLEOTIDE SEQUENCE [LARGE SCALE GENOMIC DNA]</scope>
    <source>
        <strain>G3</strain>
    </source>
</reference>
<gene>
    <name type="primary">mt:ND4L</name>
    <name type="synonym">ND4L</name>
</gene>
<sequence>MANMFLMFYLSMIMFLFGCMVFVSNRKHLLSTLLSLEYMVLSLFIFLFFYLNFMNYETYFSMFFLTFCVCEGVLGLSILVSMIRTHGNDYFQSFSILQC</sequence>
<organism>
    <name type="scientific">Anopheles gambiae</name>
    <name type="common">African malaria mosquito</name>
    <dbReference type="NCBI Taxonomy" id="7165"/>
    <lineage>
        <taxon>Eukaryota</taxon>
        <taxon>Metazoa</taxon>
        <taxon>Ecdysozoa</taxon>
        <taxon>Arthropoda</taxon>
        <taxon>Hexapoda</taxon>
        <taxon>Insecta</taxon>
        <taxon>Pterygota</taxon>
        <taxon>Neoptera</taxon>
        <taxon>Endopterygota</taxon>
        <taxon>Diptera</taxon>
        <taxon>Nematocera</taxon>
        <taxon>Culicoidea</taxon>
        <taxon>Culicidae</taxon>
        <taxon>Anophelinae</taxon>
        <taxon>Anopheles</taxon>
    </lineage>
</organism>
<evidence type="ECO:0000250" key="1"/>
<evidence type="ECO:0000255" key="2"/>
<evidence type="ECO:0000305" key="3"/>
<proteinExistence type="inferred from homology"/>
<protein>
    <recommendedName>
        <fullName>NADH-ubiquinone oxidoreductase chain 4L</fullName>
        <ecNumber>7.1.1.2</ecNumber>
    </recommendedName>
    <alternativeName>
        <fullName>NADH dehydrogenase subunit 4L</fullName>
    </alternativeName>
</protein>
<accession>P34858</accession>
<dbReference type="EC" id="7.1.1.2"/>
<dbReference type="EMBL" id="L20934">
    <property type="protein sequence ID" value="AAD12199.1"/>
    <property type="status" value="ALT_INIT"/>
    <property type="molecule type" value="Genomic_DNA"/>
</dbReference>
<dbReference type="PIR" id="T09810">
    <property type="entry name" value="T09810"/>
</dbReference>
<dbReference type="RefSeq" id="NP_008078.1">
    <property type="nucleotide sequence ID" value="NC_002084.1"/>
</dbReference>
<dbReference type="SMR" id="P34858"/>
<dbReference type="FunCoup" id="P34858">
    <property type="interactions" value="129"/>
</dbReference>
<dbReference type="STRING" id="7165.P34858"/>
<dbReference type="PaxDb" id="7165-AGAP028383-PA"/>
<dbReference type="VEuPathDB" id="VectorBase:AGAMI1_007225"/>
<dbReference type="VEuPathDB" id="VectorBase:AGAP028383"/>
<dbReference type="eggNOG" id="KOG4669">
    <property type="taxonomic scope" value="Eukaryota"/>
</dbReference>
<dbReference type="HOGENOM" id="CLU_182394_0_0_1"/>
<dbReference type="InParanoid" id="P34858"/>
<dbReference type="Proteomes" id="UP000007062">
    <property type="component" value="Mitochondrion"/>
</dbReference>
<dbReference type="GO" id="GO:0031966">
    <property type="term" value="C:mitochondrial membrane"/>
    <property type="evidence" value="ECO:0007669"/>
    <property type="project" value="UniProtKB-SubCell"/>
</dbReference>
<dbReference type="GO" id="GO:0045271">
    <property type="term" value="C:respiratory chain complex I"/>
    <property type="evidence" value="ECO:0000318"/>
    <property type="project" value="GO_Central"/>
</dbReference>
<dbReference type="GO" id="GO:0008137">
    <property type="term" value="F:NADH dehydrogenase (ubiquinone) activity"/>
    <property type="evidence" value="ECO:0007669"/>
    <property type="project" value="UniProtKB-EC"/>
</dbReference>
<dbReference type="GO" id="GO:0042773">
    <property type="term" value="P:ATP synthesis coupled electron transport"/>
    <property type="evidence" value="ECO:0007669"/>
    <property type="project" value="InterPro"/>
</dbReference>
<dbReference type="FunFam" id="1.10.287.3510:FF:000003">
    <property type="entry name" value="NADH-ubiquinone oxidoreductase chain 4L"/>
    <property type="match status" value="1"/>
</dbReference>
<dbReference type="Gene3D" id="1.10.287.3510">
    <property type="match status" value="1"/>
</dbReference>
<dbReference type="InterPro" id="IPR001133">
    <property type="entry name" value="NADH_UbQ_OxRdtase_chain4L/K"/>
</dbReference>
<dbReference type="InterPro" id="IPR039428">
    <property type="entry name" value="NUOK/Mnh_C1-like"/>
</dbReference>
<dbReference type="PANTHER" id="PTHR11434:SF0">
    <property type="entry name" value="NADH-UBIQUINONE OXIDOREDUCTASE CHAIN 4L"/>
    <property type="match status" value="1"/>
</dbReference>
<dbReference type="PANTHER" id="PTHR11434">
    <property type="entry name" value="NADH-UBIQUINONE OXIDOREDUCTASE SUBUNIT ND4L"/>
    <property type="match status" value="1"/>
</dbReference>
<dbReference type="Pfam" id="PF00420">
    <property type="entry name" value="Oxidored_q2"/>
    <property type="match status" value="1"/>
</dbReference>
<name>NU4LM_ANOGA</name>
<geneLocation type="mitochondrion"/>